<organism>
    <name type="scientific">Polaromonas naphthalenivorans (strain CJ2)</name>
    <dbReference type="NCBI Taxonomy" id="365044"/>
    <lineage>
        <taxon>Bacteria</taxon>
        <taxon>Pseudomonadati</taxon>
        <taxon>Pseudomonadota</taxon>
        <taxon>Betaproteobacteria</taxon>
        <taxon>Burkholderiales</taxon>
        <taxon>Comamonadaceae</taxon>
        <taxon>Polaromonas</taxon>
    </lineage>
</organism>
<keyword id="KW-0997">Cell inner membrane</keyword>
<keyword id="KW-1003">Cell membrane</keyword>
<keyword id="KW-0472">Membrane</keyword>
<keyword id="KW-0653">Protein transport</keyword>
<keyword id="KW-1185">Reference proteome</keyword>
<keyword id="KW-0811">Translocation</keyword>
<keyword id="KW-0812">Transmembrane</keyword>
<keyword id="KW-1133">Transmembrane helix</keyword>
<keyword id="KW-0813">Transport</keyword>
<feature type="chain" id="PRO_0000301205" description="Sec-independent protein translocase protein TatB">
    <location>
        <begin position="1"/>
        <end position="155"/>
    </location>
</feature>
<feature type="transmembrane region" description="Helical" evidence="1">
    <location>
        <begin position="1"/>
        <end position="21"/>
    </location>
</feature>
<feature type="region of interest" description="Disordered" evidence="2">
    <location>
        <begin position="81"/>
        <end position="103"/>
    </location>
</feature>
<feature type="region of interest" description="Disordered" evidence="2">
    <location>
        <begin position="131"/>
        <end position="155"/>
    </location>
</feature>
<feature type="compositionally biased region" description="Polar residues" evidence="2">
    <location>
        <begin position="89"/>
        <end position="98"/>
    </location>
</feature>
<accession>A1VK48</accession>
<dbReference type="EMBL" id="CP000529">
    <property type="protein sequence ID" value="ABM36026.1"/>
    <property type="molecule type" value="Genomic_DNA"/>
</dbReference>
<dbReference type="RefSeq" id="WP_011800121.1">
    <property type="nucleotide sequence ID" value="NC_008781.1"/>
</dbReference>
<dbReference type="SMR" id="A1VK48"/>
<dbReference type="STRING" id="365044.Pnap_0707"/>
<dbReference type="KEGG" id="pna:Pnap_0707"/>
<dbReference type="eggNOG" id="COG1826">
    <property type="taxonomic scope" value="Bacteria"/>
</dbReference>
<dbReference type="HOGENOM" id="CLU_086034_1_1_4"/>
<dbReference type="OrthoDB" id="9816005at2"/>
<dbReference type="Proteomes" id="UP000000644">
    <property type="component" value="Chromosome"/>
</dbReference>
<dbReference type="GO" id="GO:0033281">
    <property type="term" value="C:TAT protein transport complex"/>
    <property type="evidence" value="ECO:0007669"/>
    <property type="project" value="UniProtKB-UniRule"/>
</dbReference>
<dbReference type="GO" id="GO:0008320">
    <property type="term" value="F:protein transmembrane transporter activity"/>
    <property type="evidence" value="ECO:0007669"/>
    <property type="project" value="UniProtKB-UniRule"/>
</dbReference>
<dbReference type="GO" id="GO:0043953">
    <property type="term" value="P:protein transport by the Tat complex"/>
    <property type="evidence" value="ECO:0007669"/>
    <property type="project" value="UniProtKB-UniRule"/>
</dbReference>
<dbReference type="Gene3D" id="1.20.5.3310">
    <property type="match status" value="1"/>
</dbReference>
<dbReference type="HAMAP" id="MF_00237">
    <property type="entry name" value="TatB"/>
    <property type="match status" value="1"/>
</dbReference>
<dbReference type="InterPro" id="IPR003369">
    <property type="entry name" value="TatA/B/E"/>
</dbReference>
<dbReference type="InterPro" id="IPR018448">
    <property type="entry name" value="TatB"/>
</dbReference>
<dbReference type="NCBIfam" id="TIGR01410">
    <property type="entry name" value="tatB"/>
    <property type="match status" value="1"/>
</dbReference>
<dbReference type="PANTHER" id="PTHR33162">
    <property type="entry name" value="SEC-INDEPENDENT PROTEIN TRANSLOCASE PROTEIN TATA, CHLOROPLASTIC"/>
    <property type="match status" value="1"/>
</dbReference>
<dbReference type="PANTHER" id="PTHR33162:SF1">
    <property type="entry name" value="SEC-INDEPENDENT PROTEIN TRANSLOCASE PROTEIN TATA, CHLOROPLASTIC"/>
    <property type="match status" value="1"/>
</dbReference>
<dbReference type="Pfam" id="PF02416">
    <property type="entry name" value="TatA_B_E"/>
    <property type="match status" value="1"/>
</dbReference>
<dbReference type="PRINTS" id="PR01506">
    <property type="entry name" value="TATBPROTEIN"/>
</dbReference>
<protein>
    <recommendedName>
        <fullName evidence="1">Sec-independent protein translocase protein TatB</fullName>
    </recommendedName>
</protein>
<name>TATB_POLNA</name>
<sequence length="155" mass="17251">MIDLGISKIALIGAVALIVIGPEKLPRLARTVGTLLGKAQRYVNDVKQEVNRSMELDEFKKMKESVEDAARDVENSIRTGASDFEKSWSETTGSTSSDALPGFEAFPEYRNPKKKWRLKRGATPQWFKARSGIRTKAQSGAARVARFRPQPSRKA</sequence>
<proteinExistence type="inferred from homology"/>
<comment type="function">
    <text evidence="1">Part of the twin-arginine translocation (Tat) system that transports large folded proteins containing a characteristic twin-arginine motif in their signal peptide across membranes. Together with TatC, TatB is part of a receptor directly interacting with Tat signal peptides. TatB may form an oligomeric binding site that transiently accommodates folded Tat precursor proteins before their translocation.</text>
</comment>
<comment type="subunit">
    <text evidence="1">The Tat system comprises two distinct complexes: a TatABC complex, containing multiple copies of TatA, TatB and TatC subunits, and a separate TatA complex, containing only TatA subunits. Substrates initially bind to the TatABC complex, which probably triggers association of the separate TatA complex to form the active translocon.</text>
</comment>
<comment type="subcellular location">
    <subcellularLocation>
        <location evidence="1">Cell inner membrane</location>
        <topology evidence="1">Single-pass membrane protein</topology>
    </subcellularLocation>
</comment>
<comment type="similarity">
    <text evidence="1">Belongs to the TatB family.</text>
</comment>
<gene>
    <name evidence="1" type="primary">tatB</name>
    <name type="ordered locus">Pnap_0707</name>
</gene>
<evidence type="ECO:0000255" key="1">
    <source>
        <dbReference type="HAMAP-Rule" id="MF_00237"/>
    </source>
</evidence>
<evidence type="ECO:0000256" key="2">
    <source>
        <dbReference type="SAM" id="MobiDB-lite"/>
    </source>
</evidence>
<reference key="1">
    <citation type="journal article" date="2009" name="Environ. Microbiol.">
        <title>The genome of Polaromonas naphthalenivorans strain CJ2, isolated from coal tar-contaminated sediment, reveals physiological and metabolic versatility and evolution through extensive horizontal gene transfer.</title>
        <authorList>
            <person name="Yagi J.M."/>
            <person name="Sims D."/>
            <person name="Brettin T."/>
            <person name="Bruce D."/>
            <person name="Madsen E.L."/>
        </authorList>
    </citation>
    <scope>NUCLEOTIDE SEQUENCE [LARGE SCALE GENOMIC DNA]</scope>
    <source>
        <strain>CJ2</strain>
    </source>
</reference>